<proteinExistence type="evidence at transcript level"/>
<accession>Q28895</accession>
<dbReference type="EMBL" id="S77411">
    <property type="protein sequence ID" value="AAB34263.1"/>
    <property type="molecule type" value="mRNA"/>
</dbReference>
<dbReference type="PIR" id="I69229">
    <property type="entry name" value="I69229"/>
</dbReference>
<dbReference type="SMR" id="Q28895"/>
<dbReference type="FunCoup" id="Q28895">
    <property type="interactions" value="1310"/>
</dbReference>
<dbReference type="STRING" id="9615.ENSCAFP00000052889"/>
<dbReference type="Allergome" id="11896">
    <property type="allergen name" value="Can f 7"/>
</dbReference>
<dbReference type="Allergome" id="11897">
    <property type="allergen name" value="Can f 7.0101"/>
</dbReference>
<dbReference type="GlyCosmos" id="Q28895">
    <property type="glycosylation" value="1 site, No reported glycans"/>
</dbReference>
<dbReference type="PaxDb" id="9612-ENSCAFP00000024889"/>
<dbReference type="eggNOG" id="KOG4063">
    <property type="taxonomic scope" value="Eukaryota"/>
</dbReference>
<dbReference type="InParanoid" id="Q28895"/>
<dbReference type="OrthoDB" id="6489092at2759"/>
<dbReference type="Proteomes" id="UP000002254">
    <property type="component" value="Unplaced"/>
</dbReference>
<dbReference type="Proteomes" id="UP000694429">
    <property type="component" value="Unplaced"/>
</dbReference>
<dbReference type="Proteomes" id="UP000694542">
    <property type="component" value="Unplaced"/>
</dbReference>
<dbReference type="Proteomes" id="UP000805418">
    <property type="component" value="Unplaced"/>
</dbReference>
<dbReference type="GO" id="GO:0005783">
    <property type="term" value="C:endoplasmic reticulum"/>
    <property type="evidence" value="ECO:0007669"/>
    <property type="project" value="UniProtKB-SubCell"/>
</dbReference>
<dbReference type="GO" id="GO:0005576">
    <property type="term" value="C:extracellular region"/>
    <property type="evidence" value="ECO:0007669"/>
    <property type="project" value="UniProtKB-SubCell"/>
</dbReference>
<dbReference type="GO" id="GO:0005764">
    <property type="term" value="C:lysosome"/>
    <property type="evidence" value="ECO:0007669"/>
    <property type="project" value="UniProtKB-SubCell"/>
</dbReference>
<dbReference type="GO" id="GO:0015485">
    <property type="term" value="F:cholesterol binding"/>
    <property type="evidence" value="ECO:0000250"/>
    <property type="project" value="UniProtKB"/>
</dbReference>
<dbReference type="GO" id="GO:0033344">
    <property type="term" value="P:cholesterol efflux"/>
    <property type="evidence" value="ECO:0000250"/>
    <property type="project" value="UniProtKB"/>
</dbReference>
<dbReference type="GO" id="GO:0008203">
    <property type="term" value="P:cholesterol metabolic process"/>
    <property type="evidence" value="ECO:0007669"/>
    <property type="project" value="UniProtKB-KW"/>
</dbReference>
<dbReference type="GO" id="GO:0030301">
    <property type="term" value="P:cholesterol transport"/>
    <property type="evidence" value="ECO:0000250"/>
    <property type="project" value="UniProtKB"/>
</dbReference>
<dbReference type="GO" id="GO:0032367">
    <property type="term" value="P:intracellular cholesterol transport"/>
    <property type="evidence" value="ECO:0000250"/>
    <property type="project" value="UniProtKB"/>
</dbReference>
<dbReference type="CDD" id="cd00916">
    <property type="entry name" value="Npc2_like"/>
    <property type="match status" value="1"/>
</dbReference>
<dbReference type="FunFam" id="2.60.40.770:FF:000001">
    <property type="entry name" value="NPC intracellular cholesterol transporter 2"/>
    <property type="match status" value="1"/>
</dbReference>
<dbReference type="Gene3D" id="2.60.40.770">
    <property type="match status" value="1"/>
</dbReference>
<dbReference type="InterPro" id="IPR014756">
    <property type="entry name" value="Ig_E-set"/>
</dbReference>
<dbReference type="InterPro" id="IPR003172">
    <property type="entry name" value="ML_dom"/>
</dbReference>
<dbReference type="InterPro" id="IPR033916">
    <property type="entry name" value="ML_Npc2-like"/>
</dbReference>
<dbReference type="InterPro" id="IPR039670">
    <property type="entry name" value="NPC2-like"/>
</dbReference>
<dbReference type="PANTHER" id="PTHR11306">
    <property type="entry name" value="NIEMANN PICK TYPE C2 PROTEIN NPC2-RELATED"/>
    <property type="match status" value="1"/>
</dbReference>
<dbReference type="PANTHER" id="PTHR11306:SF68">
    <property type="entry name" value="NPC INTRACELLULAR CHOLESTEROL TRANSPORTER 2"/>
    <property type="match status" value="1"/>
</dbReference>
<dbReference type="Pfam" id="PF02221">
    <property type="entry name" value="E1_DerP2_DerF2"/>
    <property type="match status" value="1"/>
</dbReference>
<dbReference type="SMART" id="SM00737">
    <property type="entry name" value="ML"/>
    <property type="match status" value="1"/>
</dbReference>
<dbReference type="SUPFAM" id="SSF81296">
    <property type="entry name" value="E set domains"/>
    <property type="match status" value="1"/>
</dbReference>
<reference key="1">
    <citation type="journal article" date="1994" name="Int. J. Androl.">
        <title>Gene expression in the dog epididymis: a model for human epididymal function.</title>
        <authorList>
            <person name="Ellerbrock K."/>
            <person name="Pera I."/>
            <person name="Hartung S."/>
            <person name="Ivell R."/>
        </authorList>
    </citation>
    <scope>NUCLEOTIDE SEQUENCE [MRNA]</scope>
    <source>
        <tissue>Epididymis</tissue>
    </source>
</reference>
<reference key="2">
    <citation type="journal article" date="1994" name="Int. J. Androl.">
        <title>Regional variation of specific gene expression in the dog epididymis as revealed by in-situ transcript hybridization.</title>
        <authorList>
            <person name="Pera I."/>
            <person name="Ivell R."/>
            <person name="Kirchhoff C."/>
        </authorList>
    </citation>
    <scope>TISSUE SPECIFICITY</scope>
</reference>
<sequence length="149" mass="16056">MRLLVAAFLLLALGDLGPGGAVHFKDCGSAVGVIKELNVNPCPAQPCKLHKGQSYSVNVTFTSNIPSQSSKAVVHGIVLGVAVPFPIPEADGCKSGINCPIQKDKTYSYLNKLPVKNEYPSIKLVVQWMLLGDNNQHLFCWEIPVQIEG</sequence>
<comment type="function">
    <text evidence="1 3">Intracellular cholesterol transporter which acts in concert with NPC1 and plays an important role in the egress of cholesterol from the lysosomal compartment. Unesterified cholesterol that has been released from LDLs in the lumen of the late endosomes/lysosomes is transferred by NPC2 to the cholesterol-binding pocket in the N-terminal domain of NPC1. May bind and mobilize cholesterol that is associated with membranes. NPC2 binds cholesterol with a 1:1 stoichiometry. Can bind a variety of sterols, including lathosterol, desmosterol and the plant sterols stigmasterol and beta-sitosterol (By similarity). The secreted form of NCP2 regulates biliary cholesterol secretion via stimulation of ABCG5/ABCG8-mediated cholesterol transport (By similarity).</text>
</comment>
<comment type="catalytic activity">
    <reaction evidence="2">
        <text>cholesterol(in) = cholesterol(out)</text>
        <dbReference type="Rhea" id="RHEA:39747"/>
        <dbReference type="ChEBI" id="CHEBI:16113"/>
    </reaction>
</comment>
<comment type="subunit">
    <text evidence="1">Interacts with NPC1 (via the second lumenal domain) in a cholestrol-dependent manner. Interacts with NUS1/NgBR, the interaction stabilizes NCP2 and regulates cholesterol trafficking. Interacts with DHDDS. Interacts with NEDD4L (via C2 domain). Interacts with NPC1L1.</text>
</comment>
<comment type="subcellular location">
    <subcellularLocation>
        <location evidence="1">Secreted</location>
    </subcellularLocation>
    <subcellularLocation>
        <location evidence="1">Endoplasmic reticulum</location>
    </subcellularLocation>
    <subcellularLocation>
        <location evidence="1">Lysosome</location>
    </subcellularLocation>
    <text evidence="1">Interaction with cell-surface M6PR mediates endocytosis and targeting to lysosomes.</text>
</comment>
<comment type="tissue specificity">
    <text evidence="5">Epididymis. High levels are found in the caput and corpus regions. Weaker levels in the distal cauda and in the efferent ducts.</text>
</comment>
<comment type="domain">
    <text evidence="2">Binds cholesterol in a hydrophobic pocket; there are no hydrogen bonds between the sterol and the protein.</text>
</comment>
<comment type="similarity">
    <text evidence="6">Belongs to the NPC2 family.</text>
</comment>
<gene>
    <name evidence="1" type="primary">NPC2</name>
</gene>
<name>NPC2_CANLF</name>
<evidence type="ECO:0000250" key="1">
    <source>
        <dbReference type="UniProtKB" id="P61916"/>
    </source>
</evidence>
<evidence type="ECO:0000250" key="2">
    <source>
        <dbReference type="UniProtKB" id="P79345"/>
    </source>
</evidence>
<evidence type="ECO:0000250" key="3">
    <source>
        <dbReference type="UniProtKB" id="Q9Z0J0"/>
    </source>
</evidence>
<evidence type="ECO:0000255" key="4"/>
<evidence type="ECO:0000269" key="5">
    <source>
    </source>
</evidence>
<evidence type="ECO:0000305" key="6"/>
<feature type="signal peptide" evidence="4">
    <location>
        <begin position="1"/>
        <end position="21"/>
    </location>
</feature>
<feature type="chain" id="PRO_0000019853" description="NPC intracellular cholesterol transporter 2">
    <location>
        <begin position="22"/>
        <end position="149"/>
    </location>
</feature>
<feature type="modified residue" description="N6-acetyllysine" evidence="3">
    <location>
        <position position="116"/>
    </location>
</feature>
<feature type="glycosylation site" description="N-linked (GlcNAc...) asparagine" evidence="4">
    <location>
        <position position="58"/>
    </location>
</feature>
<feature type="disulfide bond" evidence="1">
    <location>
        <begin position="27"/>
        <end position="140"/>
    </location>
</feature>
<feature type="disulfide bond" evidence="1">
    <location>
        <begin position="42"/>
        <end position="47"/>
    </location>
</feature>
<feature type="disulfide bond" evidence="1">
    <location>
        <begin position="93"/>
        <end position="99"/>
    </location>
</feature>
<keyword id="KW-0007">Acetylation</keyword>
<keyword id="KW-0153">Cholesterol metabolism</keyword>
<keyword id="KW-1015">Disulfide bond</keyword>
<keyword id="KW-0256">Endoplasmic reticulum</keyword>
<keyword id="KW-0325">Glycoprotein</keyword>
<keyword id="KW-0443">Lipid metabolism</keyword>
<keyword id="KW-0445">Lipid transport</keyword>
<keyword id="KW-0458">Lysosome</keyword>
<keyword id="KW-1185">Reference proteome</keyword>
<keyword id="KW-0964">Secreted</keyword>
<keyword id="KW-0732">Signal</keyword>
<keyword id="KW-0753">Steroid metabolism</keyword>
<keyword id="KW-1207">Sterol metabolism</keyword>
<keyword id="KW-0813">Transport</keyword>
<organism>
    <name type="scientific">Canis lupus familiaris</name>
    <name type="common">Dog</name>
    <name type="synonym">Canis familiaris</name>
    <dbReference type="NCBI Taxonomy" id="9615"/>
    <lineage>
        <taxon>Eukaryota</taxon>
        <taxon>Metazoa</taxon>
        <taxon>Chordata</taxon>
        <taxon>Craniata</taxon>
        <taxon>Vertebrata</taxon>
        <taxon>Euteleostomi</taxon>
        <taxon>Mammalia</taxon>
        <taxon>Eutheria</taxon>
        <taxon>Laurasiatheria</taxon>
        <taxon>Carnivora</taxon>
        <taxon>Caniformia</taxon>
        <taxon>Canidae</taxon>
        <taxon>Canis</taxon>
    </lineage>
</organism>
<protein>
    <recommendedName>
        <fullName evidence="1">NPC intracellular cholesterol transporter 2</fullName>
    </recommendedName>
    <alternativeName>
        <fullName>Epididymal secretory protein E1</fullName>
        <shortName>cE1</shortName>
    </alternativeName>
    <alternativeName>
        <fullName>Niemann Pick type C2 protein homolog</fullName>
    </alternativeName>
</protein>